<protein>
    <recommendedName>
        <fullName evidence="1">Protein translocase subunit SecE</fullName>
    </recommendedName>
    <alternativeName>
        <fullName evidence="1">Protein transport protein Sec61 gamma subunit homolog</fullName>
    </alternativeName>
</protein>
<keyword id="KW-1003">Cell membrane</keyword>
<keyword id="KW-0472">Membrane</keyword>
<keyword id="KW-0653">Protein transport</keyword>
<keyword id="KW-0811">Translocation</keyword>
<keyword id="KW-0812">Transmembrane</keyword>
<keyword id="KW-1133">Transmembrane helix</keyword>
<keyword id="KW-0813">Transport</keyword>
<proteinExistence type="inferred from homology"/>
<name>SECE_PYRHO</name>
<dbReference type="EMBL" id="BA000001">
    <property type="status" value="NOT_ANNOTATED_CDS"/>
    <property type="molecule type" value="Genomic_DNA"/>
</dbReference>
<dbReference type="RefSeq" id="WP_010884122.1">
    <property type="nucleotide sequence ID" value="NC_000961.1"/>
</dbReference>
<dbReference type="SMR" id="P58199"/>
<dbReference type="GeneID" id="1443904"/>
<dbReference type="OrthoDB" id="86216at2157"/>
<dbReference type="Proteomes" id="UP000000752">
    <property type="component" value="Chromosome"/>
</dbReference>
<dbReference type="GO" id="GO:0005886">
    <property type="term" value="C:plasma membrane"/>
    <property type="evidence" value="ECO:0007669"/>
    <property type="project" value="UniProtKB-SubCell"/>
</dbReference>
<dbReference type="GO" id="GO:0008320">
    <property type="term" value="F:protein transmembrane transporter activity"/>
    <property type="evidence" value="ECO:0007669"/>
    <property type="project" value="UniProtKB-UniRule"/>
</dbReference>
<dbReference type="GO" id="GO:0065002">
    <property type="term" value="P:intracellular protein transmembrane transport"/>
    <property type="evidence" value="ECO:0007669"/>
    <property type="project" value="UniProtKB-UniRule"/>
</dbReference>
<dbReference type="GO" id="GO:0009306">
    <property type="term" value="P:protein secretion"/>
    <property type="evidence" value="ECO:0007669"/>
    <property type="project" value="UniProtKB-UniRule"/>
</dbReference>
<dbReference type="GO" id="GO:0006605">
    <property type="term" value="P:protein targeting"/>
    <property type="evidence" value="ECO:0007669"/>
    <property type="project" value="UniProtKB-UniRule"/>
</dbReference>
<dbReference type="Gene3D" id="1.20.5.820">
    <property type="entry name" value="Preprotein translocase SecE subunit"/>
    <property type="match status" value="1"/>
</dbReference>
<dbReference type="HAMAP" id="MF_00422">
    <property type="entry name" value="SecE"/>
    <property type="match status" value="1"/>
</dbReference>
<dbReference type="InterPro" id="IPR023391">
    <property type="entry name" value="Prot_translocase_SecE_dom_sf"/>
</dbReference>
<dbReference type="InterPro" id="IPR008158">
    <property type="entry name" value="Translocase_Sec61-g"/>
</dbReference>
<dbReference type="InterPro" id="IPR001901">
    <property type="entry name" value="Translocase_SecE/Sec61-g"/>
</dbReference>
<dbReference type="NCBIfam" id="NF006909">
    <property type="entry name" value="PRK09400.1-4"/>
    <property type="match status" value="1"/>
</dbReference>
<dbReference type="NCBIfam" id="TIGR00327">
    <property type="entry name" value="secE_euk_arch"/>
    <property type="match status" value="1"/>
</dbReference>
<dbReference type="Pfam" id="PF00584">
    <property type="entry name" value="SecE"/>
    <property type="match status" value="1"/>
</dbReference>
<dbReference type="SUPFAM" id="SSF103456">
    <property type="entry name" value="Preprotein translocase SecE subunit"/>
    <property type="match status" value="1"/>
</dbReference>
<dbReference type="PROSITE" id="PS01067">
    <property type="entry name" value="SECE_SEC61G"/>
    <property type="match status" value="1"/>
</dbReference>
<reference key="1">
    <citation type="journal article" date="1998" name="DNA Res.">
        <title>Complete sequence and gene organization of the genome of a hyper-thermophilic archaebacterium, Pyrococcus horikoshii OT3.</title>
        <authorList>
            <person name="Kawarabayasi Y."/>
            <person name="Sawada M."/>
            <person name="Horikawa H."/>
            <person name="Haikawa Y."/>
            <person name="Hino Y."/>
            <person name="Yamamoto S."/>
            <person name="Sekine M."/>
            <person name="Baba S."/>
            <person name="Kosugi H."/>
            <person name="Hosoyama A."/>
            <person name="Nagai Y."/>
            <person name="Sakai M."/>
            <person name="Ogura K."/>
            <person name="Otsuka R."/>
            <person name="Nakazawa H."/>
            <person name="Takamiya M."/>
            <person name="Ohfuku Y."/>
            <person name="Funahashi T."/>
            <person name="Tanaka T."/>
            <person name="Kudoh Y."/>
            <person name="Yamazaki J."/>
            <person name="Kushida N."/>
            <person name="Oguchi A."/>
            <person name="Aoki K."/>
            <person name="Yoshizawa T."/>
            <person name="Nakamura Y."/>
            <person name="Robb F.T."/>
            <person name="Horikoshi K."/>
            <person name="Masuchi Y."/>
            <person name="Shizuya H."/>
            <person name="Kikuchi H."/>
        </authorList>
    </citation>
    <scope>NUCLEOTIDE SEQUENCE [LARGE SCALE GENOMIC DNA]</scope>
    <source>
        <strain>ATCC 700860 / DSM 12428 / JCM 9974 / NBRC 100139 / OT-3</strain>
    </source>
</reference>
<reference key="2">
    <citation type="unpublished observations" date="2001-06">
        <authorList>
            <person name="Bairoch A."/>
        </authorList>
    </citation>
    <scope>IDENTIFICATION</scope>
</reference>
<evidence type="ECO:0000255" key="1">
    <source>
        <dbReference type="HAMAP-Rule" id="MF_00422"/>
    </source>
</evidence>
<gene>
    <name evidence="1" type="primary">secE</name>
    <name type="ordered locus">PH0002.1</name>
</gene>
<organism>
    <name type="scientific">Pyrococcus horikoshii (strain ATCC 700860 / DSM 12428 / JCM 9974 / NBRC 100139 / OT-3)</name>
    <dbReference type="NCBI Taxonomy" id="70601"/>
    <lineage>
        <taxon>Archaea</taxon>
        <taxon>Methanobacteriati</taxon>
        <taxon>Methanobacteriota</taxon>
        <taxon>Thermococci</taxon>
        <taxon>Thermococcales</taxon>
        <taxon>Thermococcaceae</taxon>
        <taxon>Pyrococcus</taxon>
    </lineage>
</organism>
<feature type="chain" id="PRO_0000104226" description="Protein translocase subunit SecE">
    <location>
        <begin position="1"/>
        <end position="61"/>
    </location>
</feature>
<feature type="transmembrane region" description="Helical" evidence="1">
    <location>
        <begin position="39"/>
        <end position="59"/>
    </location>
</feature>
<comment type="function">
    <text evidence="1">Essential subunit of the Sec protein translocation channel SecYEG. Clamps together the 2 halves of SecY. May contact the channel plug during translocation.</text>
</comment>
<comment type="subunit">
    <text evidence="1">Component of the Sec protein translocase complex. Heterotrimer consisting of SecY (alpha), SecG (beta) and SecE (gamma) subunits. The heterotrimers can form oligomers, although 1 heterotrimer is thought to be able to translocate proteins. Interacts with the ribosome. May interact with SecDF, and other proteins may be involved.</text>
</comment>
<comment type="subcellular location">
    <subcellularLocation>
        <location evidence="1">Cell membrane</location>
        <topology evidence="1">Single-pass membrane protein</topology>
    </subcellularLocation>
</comment>
<comment type="similarity">
    <text evidence="1">Belongs to the SecE/SEC61-gamma family.</text>
</comment>
<sequence>MPEFQERVRNFFKESKRVFLVTKKPGWEEYKKAAKITGLGILVIGLVGMLIRIIGILMLGG</sequence>
<accession>P58199</accession>